<evidence type="ECO:0000255" key="1">
    <source>
        <dbReference type="HAMAP-Rule" id="MF_00117"/>
    </source>
</evidence>
<feature type="chain" id="PRO_0000192219" description="33 kDa chaperonin">
    <location>
        <begin position="1"/>
        <end position="302"/>
    </location>
</feature>
<feature type="disulfide bond" description="Redox-active" evidence="1">
    <location>
        <begin position="240"/>
        <end position="242"/>
    </location>
</feature>
<feature type="disulfide bond" description="Redox-active" evidence="1">
    <location>
        <begin position="273"/>
        <end position="276"/>
    </location>
</feature>
<organism>
    <name type="scientific">Synechocystis sp. (strain ATCC 27184 / PCC 6803 / Kazusa)</name>
    <dbReference type="NCBI Taxonomy" id="1111708"/>
    <lineage>
        <taxon>Bacteria</taxon>
        <taxon>Bacillati</taxon>
        <taxon>Cyanobacteriota</taxon>
        <taxon>Cyanophyceae</taxon>
        <taxon>Synechococcales</taxon>
        <taxon>Merismopediaceae</taxon>
        <taxon>Synechocystis</taxon>
    </lineage>
</organism>
<gene>
    <name evidence="1" type="primary">hslO</name>
    <name type="ordered locus">sll1988</name>
</gene>
<protein>
    <recommendedName>
        <fullName evidence="1">33 kDa chaperonin</fullName>
    </recommendedName>
    <alternativeName>
        <fullName evidence="1">Heat shock protein 33 homolog</fullName>
        <shortName evidence="1">HSP33</shortName>
    </alternativeName>
</protein>
<reference key="1">
    <citation type="journal article" date="1996" name="DNA Res.">
        <title>Sequence analysis of the genome of the unicellular cyanobacterium Synechocystis sp. strain PCC6803. II. Sequence determination of the entire genome and assignment of potential protein-coding regions.</title>
        <authorList>
            <person name="Kaneko T."/>
            <person name="Sato S."/>
            <person name="Kotani H."/>
            <person name="Tanaka A."/>
            <person name="Asamizu E."/>
            <person name="Nakamura Y."/>
            <person name="Miyajima N."/>
            <person name="Hirosawa M."/>
            <person name="Sugiura M."/>
            <person name="Sasamoto S."/>
            <person name="Kimura T."/>
            <person name="Hosouchi T."/>
            <person name="Matsuno A."/>
            <person name="Muraki A."/>
            <person name="Nakazaki N."/>
            <person name="Naruo K."/>
            <person name="Okumura S."/>
            <person name="Shimpo S."/>
            <person name="Takeuchi C."/>
            <person name="Wada T."/>
            <person name="Watanabe A."/>
            <person name="Yamada M."/>
            <person name="Yasuda M."/>
            <person name="Tabata S."/>
        </authorList>
    </citation>
    <scope>NUCLEOTIDE SEQUENCE [LARGE SCALE GENOMIC DNA]</scope>
    <source>
        <strain>ATCC 27184 / PCC 6803 / Kazusa</strain>
    </source>
</reference>
<keyword id="KW-0143">Chaperone</keyword>
<keyword id="KW-0963">Cytoplasm</keyword>
<keyword id="KW-1015">Disulfide bond</keyword>
<keyword id="KW-0676">Redox-active center</keyword>
<keyword id="KW-1185">Reference proteome</keyword>
<keyword id="KW-0862">Zinc</keyword>
<proteinExistence type="inferred from homology"/>
<sequence length="302" mass="32205">MADQLIRATAADGGIRAVGVITTNLTEEARQRHRLSYVATAALGRTMAAGLLLASSMKQEKSRVNIRIRGNGPLGGLLVDAGLDGTVRGYVQNPSVELAPNAQGKLDVGGAVGQDGFLYVVRDVGFGYPYSSTVELVSGEIGEDVTHYLVTSEQTPSALLLGVFVGKDGVTAAGGLLLQVMPKAARDEALVAALESRLGHLTGFTPLLRSGKSLKDIFQELLGDFGLAILPEVQLLRFDCRCSFPRVLGALKILGQDELEDMIEKDNGAEATCDFCGEVYQADRHHLAQLIGEIQREKAEKL</sequence>
<accession>P73910</accession>
<comment type="function">
    <text evidence="1">Redox regulated molecular chaperone. Protects both thermally unfolding and oxidatively damaged proteins from irreversible aggregation. Plays an important role in the bacterial defense system toward oxidative stress.</text>
</comment>
<comment type="subcellular location">
    <subcellularLocation>
        <location evidence="1">Cytoplasm</location>
    </subcellularLocation>
</comment>
<comment type="PTM">
    <text evidence="1">Under oxidizing conditions two disulfide bonds are formed involving the reactive cysteines. Under reducing conditions zinc is bound to the reactive cysteines and the protein is inactive.</text>
</comment>
<comment type="similarity">
    <text evidence="1">Belongs to the HSP33 family.</text>
</comment>
<dbReference type="EMBL" id="BA000022">
    <property type="protein sequence ID" value="BAA17974.1"/>
    <property type="molecule type" value="Genomic_DNA"/>
</dbReference>
<dbReference type="PIR" id="S75112">
    <property type="entry name" value="S75112"/>
</dbReference>
<dbReference type="SMR" id="P73910"/>
<dbReference type="FunCoup" id="P73910">
    <property type="interactions" value="129"/>
</dbReference>
<dbReference type="STRING" id="1148.gene:10498843"/>
<dbReference type="PaxDb" id="1148-1653057"/>
<dbReference type="EnsemblBacteria" id="BAA17974">
    <property type="protein sequence ID" value="BAA17974"/>
    <property type="gene ID" value="BAA17974"/>
</dbReference>
<dbReference type="KEGG" id="syn:sll1988"/>
<dbReference type="eggNOG" id="COG1281">
    <property type="taxonomic scope" value="Bacteria"/>
</dbReference>
<dbReference type="InParanoid" id="P73910"/>
<dbReference type="PhylomeDB" id="P73910"/>
<dbReference type="Proteomes" id="UP000001425">
    <property type="component" value="Chromosome"/>
</dbReference>
<dbReference type="GO" id="GO:0005737">
    <property type="term" value="C:cytoplasm"/>
    <property type="evidence" value="ECO:0000318"/>
    <property type="project" value="GO_Central"/>
</dbReference>
<dbReference type="GO" id="GO:0044183">
    <property type="term" value="F:protein folding chaperone"/>
    <property type="evidence" value="ECO:0000318"/>
    <property type="project" value="GO_Central"/>
</dbReference>
<dbReference type="GO" id="GO:0051082">
    <property type="term" value="F:unfolded protein binding"/>
    <property type="evidence" value="ECO:0007669"/>
    <property type="project" value="UniProtKB-UniRule"/>
</dbReference>
<dbReference type="GO" id="GO:0042026">
    <property type="term" value="P:protein refolding"/>
    <property type="evidence" value="ECO:0000318"/>
    <property type="project" value="GO_Central"/>
</dbReference>
<dbReference type="CDD" id="cd00498">
    <property type="entry name" value="Hsp33"/>
    <property type="match status" value="1"/>
</dbReference>
<dbReference type="Gene3D" id="3.55.30.10">
    <property type="entry name" value="Hsp33 domain"/>
    <property type="match status" value="1"/>
</dbReference>
<dbReference type="Gene3D" id="3.90.1280.10">
    <property type="entry name" value="HSP33 redox switch-like"/>
    <property type="match status" value="1"/>
</dbReference>
<dbReference type="HAMAP" id="MF_00117">
    <property type="entry name" value="HslO"/>
    <property type="match status" value="1"/>
</dbReference>
<dbReference type="InterPro" id="IPR000397">
    <property type="entry name" value="Heat_shock_Hsp33"/>
</dbReference>
<dbReference type="InterPro" id="IPR016154">
    <property type="entry name" value="Heat_shock_Hsp33_C"/>
</dbReference>
<dbReference type="InterPro" id="IPR016153">
    <property type="entry name" value="Heat_shock_Hsp33_N"/>
</dbReference>
<dbReference type="NCBIfam" id="NF001033">
    <property type="entry name" value="PRK00114.1"/>
    <property type="match status" value="1"/>
</dbReference>
<dbReference type="PANTHER" id="PTHR30111">
    <property type="entry name" value="33 KDA CHAPERONIN"/>
    <property type="match status" value="1"/>
</dbReference>
<dbReference type="PANTHER" id="PTHR30111:SF1">
    <property type="entry name" value="33 KDA CHAPERONIN"/>
    <property type="match status" value="1"/>
</dbReference>
<dbReference type="Pfam" id="PF01430">
    <property type="entry name" value="HSP33"/>
    <property type="match status" value="1"/>
</dbReference>
<dbReference type="PIRSF" id="PIRSF005261">
    <property type="entry name" value="Heat_shock_Hsp33"/>
    <property type="match status" value="1"/>
</dbReference>
<dbReference type="SUPFAM" id="SSF64397">
    <property type="entry name" value="Hsp33 domain"/>
    <property type="match status" value="1"/>
</dbReference>
<dbReference type="SUPFAM" id="SSF118352">
    <property type="entry name" value="HSP33 redox switch-like"/>
    <property type="match status" value="1"/>
</dbReference>
<name>HSLO_SYNY3</name>